<gene>
    <name evidence="1" type="primary">cofD</name>
    <name type="ordered locus">MM_1874</name>
</gene>
<feature type="chain" id="PRO_0000145774" description="2-phospho-L-lactate transferase">
    <location>
        <begin position="1"/>
        <end position="303"/>
    </location>
</feature>
<feature type="binding site" evidence="2">
    <location>
        <position position="48"/>
    </location>
    <ligand>
        <name>7,8-didemethyl-8-hydroxy-5-deazariboflavin</name>
        <dbReference type="ChEBI" id="CHEBI:59904"/>
    </ligand>
</feature>
<feature type="binding site" evidence="2">
    <location>
        <position position="87"/>
    </location>
    <ligand>
        <name>7,8-didemethyl-8-hydroxy-5-deazariboflavin</name>
        <dbReference type="ChEBI" id="CHEBI:59904"/>
    </ligand>
</feature>
<feature type="strand" evidence="4">
    <location>
        <begin position="2"/>
        <end position="5"/>
    </location>
</feature>
<feature type="helix" evidence="4">
    <location>
        <begin position="9"/>
        <end position="17"/>
    </location>
</feature>
<feature type="turn" evidence="4">
    <location>
        <begin position="18"/>
        <end position="20"/>
    </location>
</feature>
<feature type="helix" evidence="4">
    <location>
        <begin position="23"/>
        <end position="25"/>
    </location>
</feature>
<feature type="strand" evidence="4">
    <location>
        <begin position="27"/>
        <end position="30"/>
    </location>
</feature>
<feature type="strand" evidence="4">
    <location>
        <begin position="36"/>
        <end position="38"/>
    </location>
</feature>
<feature type="strand" evidence="4">
    <location>
        <begin position="41"/>
        <end position="43"/>
    </location>
</feature>
<feature type="helix" evidence="4">
    <location>
        <begin position="45"/>
        <end position="53"/>
    </location>
</feature>
<feature type="turn" evidence="4">
    <location>
        <begin position="54"/>
        <end position="56"/>
    </location>
</feature>
<feature type="turn" evidence="4">
    <location>
        <begin position="60"/>
        <end position="63"/>
    </location>
</feature>
<feature type="strand" evidence="4">
    <location>
        <begin position="64"/>
        <end position="66"/>
    </location>
</feature>
<feature type="helix" evidence="4">
    <location>
        <begin position="72"/>
        <end position="79"/>
    </location>
</feature>
<feature type="helix" evidence="4">
    <location>
        <begin position="90"/>
        <end position="104"/>
    </location>
</feature>
<feature type="helix" evidence="4">
    <location>
        <begin position="109"/>
        <end position="120"/>
    </location>
</feature>
<feature type="strand" evidence="4">
    <location>
        <begin position="124"/>
        <end position="129"/>
    </location>
</feature>
<feature type="strand" evidence="4">
    <location>
        <begin position="135"/>
        <end position="142"/>
    </location>
</feature>
<feature type="strand" evidence="4">
    <location>
        <begin position="144"/>
        <end position="146"/>
    </location>
</feature>
<feature type="helix" evidence="4">
    <location>
        <begin position="147"/>
        <end position="151"/>
    </location>
</feature>
<feature type="turn" evidence="5">
    <location>
        <begin position="152"/>
        <end position="156"/>
    </location>
</feature>
<feature type="strand" evidence="4">
    <location>
        <begin position="160"/>
        <end position="166"/>
    </location>
</feature>
<feature type="turn" evidence="4">
    <location>
        <begin position="167"/>
        <end position="170"/>
    </location>
</feature>
<feature type="helix" evidence="4">
    <location>
        <begin position="175"/>
        <end position="183"/>
    </location>
</feature>
<feature type="strand" evidence="4">
    <location>
        <begin position="186"/>
        <end position="189"/>
    </location>
</feature>
<feature type="turn" evidence="4">
    <location>
        <begin position="194"/>
        <end position="197"/>
    </location>
</feature>
<feature type="helix" evidence="4">
    <location>
        <begin position="199"/>
        <end position="203"/>
    </location>
</feature>
<feature type="helix" evidence="4">
    <location>
        <begin position="207"/>
        <end position="212"/>
    </location>
</feature>
<feature type="strand" evidence="4">
    <location>
        <begin position="214"/>
        <end position="219"/>
    </location>
</feature>
<feature type="strand" evidence="4">
    <location>
        <begin position="226"/>
        <end position="230"/>
    </location>
</feature>
<feature type="helix" evidence="4">
    <location>
        <begin position="232"/>
        <end position="235"/>
    </location>
</feature>
<feature type="helix" evidence="4">
    <location>
        <begin position="237"/>
        <end position="239"/>
    </location>
</feature>
<feature type="helix" evidence="4">
    <location>
        <begin position="245"/>
        <end position="252"/>
    </location>
</feature>
<feature type="turn" evidence="4">
    <location>
        <begin position="253"/>
        <end position="255"/>
    </location>
</feature>
<feature type="strand" evidence="4">
    <location>
        <begin position="258"/>
        <end position="262"/>
    </location>
</feature>
<feature type="helix" evidence="4">
    <location>
        <begin position="263"/>
        <end position="265"/>
    </location>
</feature>
<feature type="helix" evidence="4">
    <location>
        <begin position="269"/>
        <end position="275"/>
    </location>
</feature>
<feature type="strand" evidence="4">
    <location>
        <begin position="278"/>
        <end position="282"/>
    </location>
</feature>
<feature type="helix" evidence="4">
    <location>
        <begin position="289"/>
        <end position="303"/>
    </location>
</feature>
<reference key="1">
    <citation type="journal article" date="2002" name="J. Mol. Microbiol. Biotechnol.">
        <title>The genome of Methanosarcina mazei: evidence for lateral gene transfer between Bacteria and Archaea.</title>
        <authorList>
            <person name="Deppenmeier U."/>
            <person name="Johann A."/>
            <person name="Hartsch T."/>
            <person name="Merkl R."/>
            <person name="Schmitz R.A."/>
            <person name="Martinez-Arias R."/>
            <person name="Henne A."/>
            <person name="Wiezer A."/>
            <person name="Baeumer S."/>
            <person name="Jacobi C."/>
            <person name="Brueggemann H."/>
            <person name="Lienard T."/>
            <person name="Christmann A."/>
            <person name="Boemecke M."/>
            <person name="Steckel S."/>
            <person name="Bhattacharyya A."/>
            <person name="Lykidis A."/>
            <person name="Overbeek R."/>
            <person name="Klenk H.-P."/>
            <person name="Gunsalus R.P."/>
            <person name="Fritz H.-J."/>
            <person name="Gottschalk G."/>
        </authorList>
    </citation>
    <scope>NUCLEOTIDE SEQUENCE [LARGE SCALE GENOMIC DNA]</scope>
    <source>
        <strain>ATCC BAA-159 / DSM 3647 / Goe1 / Go1 / JCM 11833 / OCM 88</strain>
    </source>
</reference>
<reference key="2">
    <citation type="journal article" date="2008" name="J. Biol. Chem.">
        <title>Molecular insights into the biosynthesis of the F420 coenzyme.</title>
        <authorList>
            <person name="Forouhar F."/>
            <person name="Abashidze M."/>
            <person name="Xu H."/>
            <person name="Grochowski L.L."/>
            <person name="Seetharaman J."/>
            <person name="Hussain M."/>
            <person name="Kuzin A."/>
            <person name="Chen Y."/>
            <person name="Zhou W."/>
            <person name="Xiao R."/>
            <person name="Acton T.B."/>
            <person name="Montelione G.T."/>
            <person name="Galinier A."/>
            <person name="White R.H."/>
            <person name="Tong L."/>
        </authorList>
    </citation>
    <scope>X-RAY CRYSTALLOGRAPHY (2.50 ANGSTROMS) OF APOENZYME AND IN COMPLEXES WITH 7,8-DIDEMETHYL-8-HYDROXY-5-DEAZARIBOFLAVIN; GDP AND PHOSPHATE</scope>
</reference>
<name>COFD_METMA</name>
<dbReference type="EC" id="2.7.8.28" evidence="1"/>
<dbReference type="EMBL" id="AE008384">
    <property type="protein sequence ID" value="AAM31570.1"/>
    <property type="molecule type" value="Genomic_DNA"/>
</dbReference>
<dbReference type="RefSeq" id="WP_011033809.1">
    <property type="nucleotide sequence ID" value="NC_003901.1"/>
</dbReference>
<dbReference type="PDB" id="3C3D">
    <property type="method" value="X-ray"/>
    <property type="resolution" value="2.50 A"/>
    <property type="chains" value="A/B/C/D=1-303"/>
</dbReference>
<dbReference type="PDB" id="3C3E">
    <property type="method" value="X-ray"/>
    <property type="resolution" value="3.00 A"/>
    <property type="chains" value="A/B/C/D=1-303"/>
</dbReference>
<dbReference type="PDB" id="3CGW">
    <property type="method" value="X-ray"/>
    <property type="resolution" value="3.10 A"/>
    <property type="chains" value="A=1-303"/>
</dbReference>
<dbReference type="PDBsum" id="3C3D"/>
<dbReference type="PDBsum" id="3C3E"/>
<dbReference type="PDBsum" id="3CGW"/>
<dbReference type="SMR" id="Q8PVT6"/>
<dbReference type="GeneID" id="1480216"/>
<dbReference type="GeneID" id="82160926"/>
<dbReference type="KEGG" id="mma:MM_1874"/>
<dbReference type="PATRIC" id="fig|192952.21.peg.2159"/>
<dbReference type="eggNOG" id="arCOG04395">
    <property type="taxonomic scope" value="Archaea"/>
</dbReference>
<dbReference type="HOGENOM" id="CLU_055795_1_0_2"/>
<dbReference type="BRENDA" id="2.7.8.28">
    <property type="organism ID" value="3270"/>
</dbReference>
<dbReference type="UniPathway" id="UPA00071"/>
<dbReference type="EvolutionaryTrace" id="Q8PVT6"/>
<dbReference type="Proteomes" id="UP000000595">
    <property type="component" value="Chromosome"/>
</dbReference>
<dbReference type="GO" id="GO:0043743">
    <property type="term" value="F:LPPG:FO 2-phospho-L-lactate transferase activity"/>
    <property type="evidence" value="ECO:0007669"/>
    <property type="project" value="UniProtKB-EC"/>
</dbReference>
<dbReference type="GO" id="GO:0000287">
    <property type="term" value="F:magnesium ion binding"/>
    <property type="evidence" value="ECO:0007669"/>
    <property type="project" value="InterPro"/>
</dbReference>
<dbReference type="GO" id="GO:0052645">
    <property type="term" value="P:F420-0 metabolic process"/>
    <property type="evidence" value="ECO:0007669"/>
    <property type="project" value="UniProtKB-UniRule"/>
</dbReference>
<dbReference type="CDD" id="cd07186">
    <property type="entry name" value="CofD_like"/>
    <property type="match status" value="1"/>
</dbReference>
<dbReference type="Gene3D" id="1.10.8.240">
    <property type="entry name" value="CofD-like domain"/>
    <property type="match status" value="1"/>
</dbReference>
<dbReference type="Gene3D" id="3.40.50.10680">
    <property type="entry name" value="CofD-like domains"/>
    <property type="match status" value="1"/>
</dbReference>
<dbReference type="HAMAP" id="MF_01257">
    <property type="entry name" value="CofD"/>
    <property type="match status" value="1"/>
</dbReference>
<dbReference type="InterPro" id="IPR002882">
    <property type="entry name" value="CofD"/>
</dbReference>
<dbReference type="InterPro" id="IPR038136">
    <property type="entry name" value="CofD-like_dom_sf"/>
</dbReference>
<dbReference type="InterPro" id="IPR010115">
    <property type="entry name" value="FbiA/CofD"/>
</dbReference>
<dbReference type="NCBIfam" id="TIGR01819">
    <property type="entry name" value="F420_cofD"/>
    <property type="match status" value="1"/>
</dbReference>
<dbReference type="PANTHER" id="PTHR43007">
    <property type="entry name" value="2-PHOSPHO-L-LACTATE TRANSFERASE"/>
    <property type="match status" value="1"/>
</dbReference>
<dbReference type="PANTHER" id="PTHR43007:SF1">
    <property type="entry name" value="2-PHOSPHO-L-LACTATE TRANSFERASE"/>
    <property type="match status" value="1"/>
</dbReference>
<dbReference type="Pfam" id="PF01933">
    <property type="entry name" value="CofD"/>
    <property type="match status" value="1"/>
</dbReference>
<dbReference type="SUPFAM" id="SSF142338">
    <property type="entry name" value="CofD-like"/>
    <property type="match status" value="1"/>
</dbReference>
<sequence>MIIFSGGTGTPKLLDGLKEILPEEELTVVVNTAEDLWVSGNLISPDLDTVLYLFSDQIDRKRWWGIENDTFGTYERMKELGIEEGLKLGDRDRATHIIRSNIIRDGASLTDSTVKLSSLFGIKANILPMSDDPVSTYIETAEGIMHFQDFWIGKRGEPDVRGVDIRGVSEASISPKVLEAFEKEENILIGPSNPITSIGPIISLPGMRELLKKKKVVAVSPIIGNAPVSGPAGKLMPACGIEVSSMGVAEYYQDFLDVFVFDERDRADEFAFERLGCHASRADTLMTSTEKSKELAEIVVQAF</sequence>
<accession>Q8PVT6</accession>
<protein>
    <recommendedName>
        <fullName evidence="1 3">2-phospho-L-lactate transferase</fullName>
        <ecNumber evidence="1">2.7.8.28</ecNumber>
    </recommendedName>
</protein>
<evidence type="ECO:0000255" key="1">
    <source>
        <dbReference type="HAMAP-Rule" id="MF_01257"/>
    </source>
</evidence>
<evidence type="ECO:0000269" key="2">
    <source>
    </source>
</evidence>
<evidence type="ECO:0000303" key="3">
    <source>
    </source>
</evidence>
<evidence type="ECO:0007829" key="4">
    <source>
        <dbReference type="PDB" id="3C3D"/>
    </source>
</evidence>
<evidence type="ECO:0007829" key="5">
    <source>
        <dbReference type="PDB" id="3C3E"/>
    </source>
</evidence>
<keyword id="KW-0002">3D-structure</keyword>
<keyword id="KW-0460">Magnesium</keyword>
<keyword id="KW-0808">Transferase</keyword>
<organism>
    <name type="scientific">Methanosarcina mazei (strain ATCC BAA-159 / DSM 3647 / Goe1 / Go1 / JCM 11833 / OCM 88)</name>
    <name type="common">Methanosarcina frisia</name>
    <dbReference type="NCBI Taxonomy" id="192952"/>
    <lineage>
        <taxon>Archaea</taxon>
        <taxon>Methanobacteriati</taxon>
        <taxon>Methanobacteriota</taxon>
        <taxon>Stenosarchaea group</taxon>
        <taxon>Methanomicrobia</taxon>
        <taxon>Methanosarcinales</taxon>
        <taxon>Methanosarcinaceae</taxon>
        <taxon>Methanosarcina</taxon>
    </lineage>
</organism>
<proteinExistence type="evidence at protein level"/>
<comment type="function">
    <text evidence="1">Catalyzes the transfer of the 2-phospholactate moiety from (2S)-lactyl-2-diphospho-5'-guanosine to 7,8-didemethyl-8-hydroxy-5-deazariboflavin (FO) with the formation of oxidized coenzyme F420-0 and GMP.</text>
</comment>
<comment type="catalytic activity">
    <reaction evidence="1">
        <text>(2S)-lactyl-2-diphospho-5'-guanosine + 7,8-didemethyl-8-hydroxy-5-deazariboflavin = oxidized coenzyme F420-0 + GMP + H(+)</text>
        <dbReference type="Rhea" id="RHEA:63444"/>
        <dbReference type="ChEBI" id="CHEBI:15378"/>
        <dbReference type="ChEBI" id="CHEBI:58115"/>
        <dbReference type="ChEBI" id="CHEBI:59435"/>
        <dbReference type="ChEBI" id="CHEBI:59904"/>
        <dbReference type="ChEBI" id="CHEBI:59907"/>
        <dbReference type="EC" id="2.7.8.28"/>
    </reaction>
</comment>
<comment type="cofactor">
    <cofactor evidence="1">
        <name>Mg(2+)</name>
        <dbReference type="ChEBI" id="CHEBI:18420"/>
    </cofactor>
</comment>
<comment type="pathway">
    <text evidence="1">Cofactor biosynthesis; coenzyme F420 biosynthesis.</text>
</comment>
<comment type="subunit">
    <text evidence="1">Homodimer.</text>
</comment>
<comment type="similarity">
    <text evidence="1">Belongs to the CofD family.</text>
</comment>